<proteinExistence type="inferred from homology"/>
<organism>
    <name type="scientific">Clostridium acetobutylicum (strain ATCC 824 / DSM 792 / JCM 1419 / IAM 19013 / LMG 5710 / NBRC 13948 / NRRL B-527 / VKM B-1787 / 2291 / W)</name>
    <dbReference type="NCBI Taxonomy" id="272562"/>
    <lineage>
        <taxon>Bacteria</taxon>
        <taxon>Bacillati</taxon>
        <taxon>Bacillota</taxon>
        <taxon>Clostridia</taxon>
        <taxon>Eubacteriales</taxon>
        <taxon>Clostridiaceae</taxon>
        <taxon>Clostridium</taxon>
    </lineage>
</organism>
<evidence type="ECO:0000255" key="1">
    <source>
        <dbReference type="HAMAP-Rule" id="MF_01310"/>
    </source>
</evidence>
<evidence type="ECO:0000305" key="2"/>
<keyword id="KW-1185">Reference proteome</keyword>
<keyword id="KW-0687">Ribonucleoprotein</keyword>
<keyword id="KW-0689">Ribosomal protein</keyword>
<keyword id="KW-0694">RNA-binding</keyword>
<keyword id="KW-0699">rRNA-binding</keyword>
<protein>
    <recommendedName>
        <fullName evidence="1">Small ribosomal subunit protein uS11</fullName>
    </recommendedName>
    <alternativeName>
        <fullName evidence="2">30S ribosomal protein S11</fullName>
    </alternativeName>
</protein>
<feature type="chain" id="PRO_0000123134" description="Small ribosomal subunit protein uS11">
    <location>
        <begin position="1"/>
        <end position="131"/>
    </location>
</feature>
<gene>
    <name evidence="1" type="primary">rpsK</name>
    <name type="ordered locus">CA_C3106</name>
</gene>
<sequence>MAVQKNKKTRRRKEKKNIEHGCAHIKSTFNNSIVTITDVNGNALSWSSAGGLGFKGSRKSTPFAAQMAAETAAKTAMEHGLKSVDVFVKGPGSGREAAIRSLQAAGLEVTLIKDVTPIPHNGCRPPKRRRV</sequence>
<dbReference type="EMBL" id="AE001437">
    <property type="protein sequence ID" value="AAK81046.1"/>
    <property type="molecule type" value="Genomic_DNA"/>
</dbReference>
<dbReference type="PIR" id="C97282">
    <property type="entry name" value="C97282"/>
</dbReference>
<dbReference type="RefSeq" id="NP_349706.1">
    <property type="nucleotide sequence ID" value="NC_003030.1"/>
</dbReference>
<dbReference type="RefSeq" id="WP_010966387.1">
    <property type="nucleotide sequence ID" value="NC_003030.1"/>
</dbReference>
<dbReference type="SMR" id="Q97EK4"/>
<dbReference type="STRING" id="272562.CA_C3106"/>
<dbReference type="GeneID" id="44999593"/>
<dbReference type="KEGG" id="cac:CA_C3106"/>
<dbReference type="PATRIC" id="fig|272562.8.peg.3289"/>
<dbReference type="eggNOG" id="COG0100">
    <property type="taxonomic scope" value="Bacteria"/>
</dbReference>
<dbReference type="HOGENOM" id="CLU_072439_5_0_9"/>
<dbReference type="OrthoDB" id="9806415at2"/>
<dbReference type="Proteomes" id="UP000000814">
    <property type="component" value="Chromosome"/>
</dbReference>
<dbReference type="GO" id="GO:1990904">
    <property type="term" value="C:ribonucleoprotein complex"/>
    <property type="evidence" value="ECO:0007669"/>
    <property type="project" value="UniProtKB-KW"/>
</dbReference>
<dbReference type="GO" id="GO:0005840">
    <property type="term" value="C:ribosome"/>
    <property type="evidence" value="ECO:0007669"/>
    <property type="project" value="UniProtKB-KW"/>
</dbReference>
<dbReference type="GO" id="GO:0019843">
    <property type="term" value="F:rRNA binding"/>
    <property type="evidence" value="ECO:0007669"/>
    <property type="project" value="UniProtKB-UniRule"/>
</dbReference>
<dbReference type="GO" id="GO:0003735">
    <property type="term" value="F:structural constituent of ribosome"/>
    <property type="evidence" value="ECO:0007669"/>
    <property type="project" value="InterPro"/>
</dbReference>
<dbReference type="GO" id="GO:0006412">
    <property type="term" value="P:translation"/>
    <property type="evidence" value="ECO:0007669"/>
    <property type="project" value="UniProtKB-UniRule"/>
</dbReference>
<dbReference type="FunFam" id="3.30.420.80:FF:000001">
    <property type="entry name" value="30S ribosomal protein S11"/>
    <property type="match status" value="1"/>
</dbReference>
<dbReference type="Gene3D" id="3.30.420.80">
    <property type="entry name" value="Ribosomal protein S11"/>
    <property type="match status" value="1"/>
</dbReference>
<dbReference type="HAMAP" id="MF_01310">
    <property type="entry name" value="Ribosomal_uS11"/>
    <property type="match status" value="1"/>
</dbReference>
<dbReference type="InterPro" id="IPR001971">
    <property type="entry name" value="Ribosomal_uS11"/>
</dbReference>
<dbReference type="InterPro" id="IPR019981">
    <property type="entry name" value="Ribosomal_uS11_bac-type"/>
</dbReference>
<dbReference type="InterPro" id="IPR018102">
    <property type="entry name" value="Ribosomal_uS11_CS"/>
</dbReference>
<dbReference type="InterPro" id="IPR036967">
    <property type="entry name" value="Ribosomal_uS11_sf"/>
</dbReference>
<dbReference type="NCBIfam" id="NF003698">
    <property type="entry name" value="PRK05309.1"/>
    <property type="match status" value="1"/>
</dbReference>
<dbReference type="NCBIfam" id="TIGR03632">
    <property type="entry name" value="uS11_bact"/>
    <property type="match status" value="1"/>
</dbReference>
<dbReference type="PANTHER" id="PTHR11759">
    <property type="entry name" value="40S RIBOSOMAL PROTEIN S14/30S RIBOSOMAL PROTEIN S11"/>
    <property type="match status" value="1"/>
</dbReference>
<dbReference type="Pfam" id="PF00411">
    <property type="entry name" value="Ribosomal_S11"/>
    <property type="match status" value="1"/>
</dbReference>
<dbReference type="PIRSF" id="PIRSF002131">
    <property type="entry name" value="Ribosomal_S11"/>
    <property type="match status" value="1"/>
</dbReference>
<dbReference type="SUPFAM" id="SSF53137">
    <property type="entry name" value="Translational machinery components"/>
    <property type="match status" value="1"/>
</dbReference>
<dbReference type="PROSITE" id="PS00054">
    <property type="entry name" value="RIBOSOMAL_S11"/>
    <property type="match status" value="1"/>
</dbReference>
<accession>Q97EK4</accession>
<comment type="function">
    <text evidence="1">Located on the platform of the 30S subunit, it bridges several disparate RNA helices of the 16S rRNA. Forms part of the Shine-Dalgarno cleft in the 70S ribosome.</text>
</comment>
<comment type="subunit">
    <text evidence="1">Part of the 30S ribosomal subunit. Interacts with proteins S7 and S18. Binds to IF-3.</text>
</comment>
<comment type="similarity">
    <text evidence="1">Belongs to the universal ribosomal protein uS11 family.</text>
</comment>
<reference key="1">
    <citation type="journal article" date="2001" name="J. Bacteriol.">
        <title>Genome sequence and comparative analysis of the solvent-producing bacterium Clostridium acetobutylicum.</title>
        <authorList>
            <person name="Noelling J."/>
            <person name="Breton G."/>
            <person name="Omelchenko M.V."/>
            <person name="Makarova K.S."/>
            <person name="Zeng Q."/>
            <person name="Gibson R."/>
            <person name="Lee H.M."/>
            <person name="Dubois J."/>
            <person name="Qiu D."/>
            <person name="Hitti J."/>
            <person name="Wolf Y.I."/>
            <person name="Tatusov R.L."/>
            <person name="Sabathe F."/>
            <person name="Doucette-Stamm L.A."/>
            <person name="Soucaille P."/>
            <person name="Daly M.J."/>
            <person name="Bennett G.N."/>
            <person name="Koonin E.V."/>
            <person name="Smith D.R."/>
        </authorList>
    </citation>
    <scope>NUCLEOTIDE SEQUENCE [LARGE SCALE GENOMIC DNA]</scope>
    <source>
        <strain>ATCC 824 / DSM 792 / JCM 1419 / IAM 19013 / LMG 5710 / NBRC 13948 / NRRL B-527 / VKM B-1787 / 2291 / W</strain>
    </source>
</reference>
<name>RS11_CLOAB</name>